<protein>
    <recommendedName>
        <fullName>Tricyclene synthase 0e23, chloroplastic</fullName>
        <shortName>Am0e23</shortName>
        <ecNumber>4.2.3.105</ecNumber>
    </recommendedName>
    <alternativeName>
        <fullName>(E)-beta-ocimene synthase 0e23</fullName>
        <ecNumber>4.2.3.106</ecNumber>
    </alternativeName>
    <alternativeName>
        <fullName>Terpenoid synthase 0e23</fullName>
    </alternativeName>
</protein>
<dbReference type="EC" id="4.2.3.105"/>
<dbReference type="EC" id="4.2.3.106"/>
<dbReference type="EMBL" id="AY195607">
    <property type="protein sequence ID" value="AAO42614.1"/>
    <property type="molecule type" value="mRNA"/>
</dbReference>
<dbReference type="SMR" id="Q84NC8"/>
<dbReference type="GlyCosmos" id="Q84NC8">
    <property type="glycosylation" value="6 sites, No reported glycans"/>
</dbReference>
<dbReference type="KEGG" id="ag:AAO42614"/>
<dbReference type="BRENDA" id="4.2.3.106">
    <property type="organism ID" value="376"/>
</dbReference>
<dbReference type="UniPathway" id="UPA00213"/>
<dbReference type="GO" id="GO:0009570">
    <property type="term" value="C:chloroplast stroma"/>
    <property type="evidence" value="ECO:0000250"/>
    <property type="project" value="UniProtKB"/>
</dbReference>
<dbReference type="GO" id="GO:0034768">
    <property type="term" value="F:(E)-beta-ocimene synthase activity"/>
    <property type="evidence" value="ECO:0007669"/>
    <property type="project" value="UniProtKB-EC"/>
</dbReference>
<dbReference type="GO" id="GO:0000287">
    <property type="term" value="F:magnesium ion binding"/>
    <property type="evidence" value="ECO:0007669"/>
    <property type="project" value="InterPro"/>
</dbReference>
<dbReference type="GO" id="GO:0010333">
    <property type="term" value="F:terpene synthase activity"/>
    <property type="evidence" value="ECO:0000250"/>
    <property type="project" value="UniProtKB"/>
</dbReference>
<dbReference type="GO" id="GO:0102701">
    <property type="term" value="F:tricyclene synthase activity"/>
    <property type="evidence" value="ECO:0007669"/>
    <property type="project" value="UniProtKB-EC"/>
</dbReference>
<dbReference type="GO" id="GO:0016114">
    <property type="term" value="P:terpenoid biosynthetic process"/>
    <property type="evidence" value="ECO:0007669"/>
    <property type="project" value="UniProtKB-UniPathway"/>
</dbReference>
<dbReference type="FunFam" id="1.10.600.10:FF:000005">
    <property type="entry name" value="Ent-kaur-16-ene synthase, chloroplastic"/>
    <property type="match status" value="1"/>
</dbReference>
<dbReference type="Gene3D" id="1.10.600.10">
    <property type="entry name" value="Farnesyl Diphosphate Synthase"/>
    <property type="match status" value="1"/>
</dbReference>
<dbReference type="Gene3D" id="1.50.10.130">
    <property type="entry name" value="Terpene synthase, N-terminal domain"/>
    <property type="match status" value="1"/>
</dbReference>
<dbReference type="InterPro" id="IPR008949">
    <property type="entry name" value="Isoprenoid_synthase_dom_sf"/>
</dbReference>
<dbReference type="InterPro" id="IPR034741">
    <property type="entry name" value="Terpene_cyclase-like_1_C"/>
</dbReference>
<dbReference type="InterPro" id="IPR001906">
    <property type="entry name" value="Terpene_synth_N"/>
</dbReference>
<dbReference type="InterPro" id="IPR036965">
    <property type="entry name" value="Terpene_synth_N_sf"/>
</dbReference>
<dbReference type="InterPro" id="IPR050148">
    <property type="entry name" value="Terpene_synthase-like"/>
</dbReference>
<dbReference type="InterPro" id="IPR005630">
    <property type="entry name" value="Terpene_synthase_metal-bd"/>
</dbReference>
<dbReference type="InterPro" id="IPR008930">
    <property type="entry name" value="Terpenoid_cyclase/PrenylTrfase"/>
</dbReference>
<dbReference type="PANTHER" id="PTHR31225">
    <property type="entry name" value="OS04G0344100 PROTEIN-RELATED"/>
    <property type="match status" value="1"/>
</dbReference>
<dbReference type="PANTHER" id="PTHR31225:SF0">
    <property type="entry name" value="S-(+)-LINALOOL SYNTHASE, CHLOROPLASTIC"/>
    <property type="match status" value="1"/>
</dbReference>
<dbReference type="Pfam" id="PF01397">
    <property type="entry name" value="Terpene_synth"/>
    <property type="match status" value="1"/>
</dbReference>
<dbReference type="Pfam" id="PF03936">
    <property type="entry name" value="Terpene_synth_C"/>
    <property type="match status" value="1"/>
</dbReference>
<dbReference type="SFLD" id="SFLDS00005">
    <property type="entry name" value="Isoprenoid_Synthase_Type_I"/>
    <property type="match status" value="1"/>
</dbReference>
<dbReference type="SFLD" id="SFLDG01019">
    <property type="entry name" value="Terpene_Cyclase_Like_1_C_Termi"/>
    <property type="match status" value="1"/>
</dbReference>
<dbReference type="SUPFAM" id="SSF48239">
    <property type="entry name" value="Terpenoid cyclases/Protein prenyltransferases"/>
    <property type="match status" value="1"/>
</dbReference>
<dbReference type="SUPFAM" id="SSF48576">
    <property type="entry name" value="Terpenoid synthases"/>
    <property type="match status" value="1"/>
</dbReference>
<sequence length="579" mass="66728">MAFCISYLGAVLPFSLSPRTKFAIFHNTSKHAAYKTCRWNIPRDVGSTPPPSKLHQALCLNAHSTSCMAELPMDYEGKIQGTRHLLHLKDENDPIESLIFVDATQRLGVNHHFQKEIEEILRKSYATMKSPSICKYHTLHDVSLFFCLMRQHGRYVSADVFNNFKGESGRFKEELKRDTRGLVELYEAAQLSFEGERILDEAENFSRQILHGNLASMEDNLRRSVGNKLRYPFHKSIARFTGINYDDDLGGMYEWGKTLRELALMDLQVERSVYQEELLQVSKWWNELGLYKKLTLARNRPFEFYMWSMVILTDYINLSEQRVELTKSVAFIYLIDDIFDVYGTLDELIIFTEAVNKWDYSATDTLPDNMKMCYMTLLDTINGTSQKIYEKYGHNPIDSLKTTWKSLCSAFLVEAKWSASGSLPSANEYLENEKVSSGVYVVLIHLFFLMGLGGTNRGSIELNDTRELMSSIAIIVRIWNDLGCAKNEHQNGKDGSYLDCYKKEHINLTAAQVHEHALELVAIEWKRLNKESFNLNHDSVSSFKQAALNFARMVPLMYSYDNNRRGPVLEEYVKFMLSD</sequence>
<comment type="function">
    <text evidence="3">Contributes to floral scent emission.</text>
</comment>
<comment type="catalytic activity">
    <reaction evidence="3">
        <text>(2E)-geranyl diphosphate = tricyclene + diphosphate</text>
        <dbReference type="Rhea" id="RHEA:32687"/>
        <dbReference type="ChEBI" id="CHEBI:33019"/>
        <dbReference type="ChEBI" id="CHEBI:58057"/>
        <dbReference type="ChEBI" id="CHEBI:64266"/>
        <dbReference type="EC" id="4.2.3.105"/>
    </reaction>
</comment>
<comment type="catalytic activity">
    <reaction evidence="3">
        <text>(2E)-geranyl diphosphate = (E)-beta-ocimene + diphosphate</text>
        <dbReference type="Rhea" id="RHEA:32691"/>
        <dbReference type="ChEBI" id="CHEBI:33019"/>
        <dbReference type="ChEBI" id="CHEBI:58057"/>
        <dbReference type="ChEBI" id="CHEBI:64280"/>
        <dbReference type="EC" id="4.2.3.106"/>
    </reaction>
</comment>
<comment type="cofactor">
    <cofactor evidence="1">
        <name>Mg(2+)</name>
        <dbReference type="ChEBI" id="CHEBI:18420"/>
    </cofactor>
    <cofactor evidence="1">
        <name>Mn(2+)</name>
        <dbReference type="ChEBI" id="CHEBI:29035"/>
    </cofactor>
    <text evidence="1">Binds 3 Mg(2+) or Mn(2+) ions per subunit.</text>
</comment>
<comment type="pathway">
    <text>Secondary metabolite biosynthesis; terpenoid biosynthesis.</text>
</comment>
<comment type="subcellular location">
    <subcellularLocation>
        <location evidence="1">Plastid</location>
        <location evidence="1">Chloroplast stroma</location>
    </subcellularLocation>
</comment>
<comment type="tissue specificity">
    <text evidence="3">Accumulates in flowers; mostly expressed in both upper and lower petal lobes, and, to a lower extent, in tube and stamens.</text>
</comment>
<comment type="developmental stage">
    <text evidence="3">First observed in mature flower buds and accumulates transiently during 4 days after anthesis.</text>
</comment>
<comment type="induction">
    <text evidence="3">Circadian-regulation with highest levels in early afternoon and lowest levels during the night.</text>
</comment>
<comment type="domain">
    <text>The Asp-Asp-Xaa-Xaa-Asp/Glu (DDXXD/E) motif is important for the catalytic activity, presumably through binding to Mg(2+).</text>
</comment>
<comment type="similarity">
    <text evidence="4">Belongs to the terpene synthase family. Tpsg subfamily.</text>
</comment>
<organism>
    <name type="scientific">Antirrhinum majus</name>
    <name type="common">Garden snapdragon</name>
    <dbReference type="NCBI Taxonomy" id="4151"/>
    <lineage>
        <taxon>Eukaryota</taxon>
        <taxon>Viridiplantae</taxon>
        <taxon>Streptophyta</taxon>
        <taxon>Embryophyta</taxon>
        <taxon>Tracheophyta</taxon>
        <taxon>Spermatophyta</taxon>
        <taxon>Magnoliopsida</taxon>
        <taxon>eudicotyledons</taxon>
        <taxon>Gunneridae</taxon>
        <taxon>Pentapetalae</taxon>
        <taxon>asterids</taxon>
        <taxon>lamiids</taxon>
        <taxon>Lamiales</taxon>
        <taxon>Plantaginaceae</taxon>
        <taxon>Antirrhineae</taxon>
        <taxon>Antirrhinum</taxon>
    </lineage>
</organism>
<proteinExistence type="evidence at protein level"/>
<accession>Q84NC8</accession>
<keyword id="KW-0150">Chloroplast</keyword>
<keyword id="KW-0325">Glycoprotein</keyword>
<keyword id="KW-0456">Lyase</keyword>
<keyword id="KW-0460">Magnesium</keyword>
<keyword id="KW-0464">Manganese</keyword>
<keyword id="KW-0479">Metal-binding</keyword>
<keyword id="KW-0934">Plastid</keyword>
<keyword id="KW-0809">Transit peptide</keyword>
<feature type="transit peptide" description="Chloroplast" evidence="2">
    <location>
        <begin position="1"/>
        <end position="66"/>
    </location>
</feature>
<feature type="chain" id="PRO_0000418161" description="Tricyclene synthase 0e23, chloroplastic">
    <location>
        <begin position="67"/>
        <end position="579"/>
    </location>
</feature>
<feature type="short sequence motif" description="DDXXD motif">
    <location>
        <begin position="336"/>
        <end position="340"/>
    </location>
</feature>
<feature type="binding site" evidence="1">
    <location>
        <position position="336"/>
    </location>
    <ligand>
        <name>Mg(2+)</name>
        <dbReference type="ChEBI" id="CHEBI:18420"/>
        <label>1</label>
    </ligand>
</feature>
<feature type="binding site" evidence="1">
    <location>
        <position position="336"/>
    </location>
    <ligand>
        <name>Mg(2+)</name>
        <dbReference type="ChEBI" id="CHEBI:18420"/>
        <label>2</label>
    </ligand>
</feature>
<feature type="binding site" evidence="1">
    <location>
        <position position="340"/>
    </location>
    <ligand>
        <name>Mg(2+)</name>
        <dbReference type="ChEBI" id="CHEBI:18420"/>
        <label>1</label>
    </ligand>
</feature>
<feature type="binding site" evidence="1">
    <location>
        <position position="340"/>
    </location>
    <ligand>
        <name>Mg(2+)</name>
        <dbReference type="ChEBI" id="CHEBI:18420"/>
        <label>2</label>
    </ligand>
</feature>
<feature type="binding site" evidence="1">
    <location>
        <position position="480"/>
    </location>
    <ligand>
        <name>Mg(2+)</name>
        <dbReference type="ChEBI" id="CHEBI:18420"/>
        <label>3</label>
    </ligand>
</feature>
<feature type="binding site" evidence="1">
    <location>
        <position position="488"/>
    </location>
    <ligand>
        <name>Mg(2+)</name>
        <dbReference type="ChEBI" id="CHEBI:18420"/>
        <label>3</label>
    </ligand>
</feature>
<feature type="glycosylation site" description="N-linked (GlcNAc...) asparagine" evidence="2">
    <location>
        <position position="27"/>
    </location>
</feature>
<feature type="glycosylation site" description="N-linked (GlcNAc...) asparagine" evidence="2">
    <location>
        <position position="204"/>
    </location>
</feature>
<feature type="glycosylation site" description="N-linked (GlcNAc...) asparagine" evidence="2">
    <location>
        <position position="317"/>
    </location>
</feature>
<feature type="glycosylation site" description="N-linked (GlcNAc...) asparagine" evidence="2">
    <location>
        <position position="382"/>
    </location>
</feature>
<feature type="glycosylation site" description="N-linked (GlcNAc...) asparagine" evidence="2">
    <location>
        <position position="463"/>
    </location>
</feature>
<feature type="glycosylation site" description="N-linked (GlcNAc...) asparagine" evidence="2">
    <location>
        <position position="507"/>
    </location>
</feature>
<reference key="1">
    <citation type="journal article" date="2003" name="Plant Cell">
        <title>(E)-beta-ocimene and myrcene synthase genes of floral scent biosynthesis in snapdragon: function and expression of three terpene synthase genes of a new terpene synthase subfamily.</title>
        <authorList>
            <person name="Dudareva N."/>
            <person name="Martin D."/>
            <person name="Kish C.M."/>
            <person name="Kolosova N."/>
            <person name="Gorenstein N."/>
            <person name="Faeldt J."/>
            <person name="Miller B."/>
            <person name="Bohlmann J."/>
        </authorList>
    </citation>
    <scope>NUCLEOTIDE SEQUENCE [MRNA]</scope>
    <scope>FUNCTION</scope>
    <scope>TISSUE SPECIFICITY</scope>
    <scope>DEVELOPMENTAL STAGE</scope>
    <scope>CATALYTIC ACTIVITY</scope>
    <scope>INDUCTION</scope>
    <source>
        <tissue>Petal</tissue>
    </source>
</reference>
<gene>
    <name type="primary">0e23</name>
</gene>
<evidence type="ECO:0000250" key="1"/>
<evidence type="ECO:0000255" key="2"/>
<evidence type="ECO:0000269" key="3">
    <source>
    </source>
</evidence>
<evidence type="ECO:0000305" key="4"/>
<name>TPS1_ANTMA</name>